<sequence length="181" mass="20495">MQNVTDSFVSLGHWPSAGGFGFNTDILATNPINLSVVLGVVIYFGKGVLNDLLDNRKQRILSTIRNSEELRQAAIEQLEKARARLRKVETEANDYRVNGYSEIEREKQNLIKATSENLERLENYKNETLLFEQQRAINQVRQRVFQQALQGALGTLNSCLNSELHFRTISANIGILGVMEE</sequence>
<comment type="function">
    <text evidence="1">F(1)F(0) ATP synthase produces ATP from ADP in the presence of a proton or sodium gradient. F-type ATPases consist of two structural domains, F(1) containing the extramembraneous catalytic core and F(0) containing the membrane proton channel, linked together by a central stalk and a peripheral stalk. During catalysis, ATP synthesis in the catalytic domain of F(1) is coupled via a rotary mechanism of the central stalk subunits to proton translocation.</text>
</comment>
<comment type="function">
    <text evidence="1">Component of the F(0) channel, it forms part of the peripheral stalk, linking F(1) to F(0).</text>
</comment>
<comment type="subunit">
    <text evidence="1">F-type ATPases have 2 components, F(1) - the catalytic core - and F(0) - the membrane proton channel. F(1) has five subunits: alpha(3), beta(3), gamma(1), delta(1), epsilon(1). F(0) has four main subunits: a(1), b(1), b'(1) and c(10-14). The alpha and beta chains form an alternating ring which encloses part of the gamma chain. F(1) is attached to F(0) by a central stalk formed by the gamma and epsilon chains, while a peripheral stalk is formed by the delta, b and b' chains.</text>
</comment>
<comment type="subcellular location">
    <subcellularLocation>
        <location evidence="1">Plastid</location>
        <location evidence="1">Chloroplast thylakoid membrane</location>
        <topology evidence="1">Single-pass membrane protein</topology>
    </subcellularLocation>
</comment>
<comment type="miscellaneous">
    <text>In plastids the F-type ATPase is also known as CF(1)CF(0).</text>
</comment>
<comment type="similarity">
    <text evidence="1">Belongs to the ATPase B chain family.</text>
</comment>
<protein>
    <recommendedName>
        <fullName evidence="1">ATP synthase subunit b, chloroplastic</fullName>
    </recommendedName>
    <alternativeName>
        <fullName evidence="1">ATP synthase F(0) sector subunit b</fullName>
    </alternativeName>
    <alternativeName>
        <fullName evidence="1">ATPase subunit I</fullName>
    </alternativeName>
</protein>
<name>ATPF_LEMMI</name>
<gene>
    <name evidence="1" type="primary">atpF</name>
</gene>
<reference key="1">
    <citation type="journal article" date="2008" name="J. Mol. Evol.">
        <title>Complete sequence of the Duckweed (Lemna minor) chloroplast genome: structural organization and phylogenetic relationships to other angiosperms.</title>
        <authorList>
            <person name="Mardanov A.V."/>
            <person name="Ravin N.V."/>
            <person name="Kuznetsov B.B."/>
            <person name="Samigullin T.H."/>
            <person name="Antonov A.S."/>
            <person name="Kolganova T.V."/>
            <person name="Skyabin K.G."/>
        </authorList>
    </citation>
    <scope>NUCLEOTIDE SEQUENCE [LARGE SCALE GENOMIC DNA]</scope>
</reference>
<dbReference type="EMBL" id="DQ400350">
    <property type="protein sequence ID" value="ABD48481.1"/>
    <property type="molecule type" value="Genomic_DNA"/>
</dbReference>
<dbReference type="RefSeq" id="YP_001595494.1">
    <property type="nucleotide sequence ID" value="NC_010109.1"/>
</dbReference>
<dbReference type="SMR" id="A9L982"/>
<dbReference type="GeneID" id="5787530"/>
<dbReference type="GO" id="GO:0009535">
    <property type="term" value="C:chloroplast thylakoid membrane"/>
    <property type="evidence" value="ECO:0007669"/>
    <property type="project" value="UniProtKB-SubCell"/>
</dbReference>
<dbReference type="GO" id="GO:0045259">
    <property type="term" value="C:proton-transporting ATP synthase complex"/>
    <property type="evidence" value="ECO:0007669"/>
    <property type="project" value="UniProtKB-KW"/>
</dbReference>
<dbReference type="GO" id="GO:0046933">
    <property type="term" value="F:proton-transporting ATP synthase activity, rotational mechanism"/>
    <property type="evidence" value="ECO:0007669"/>
    <property type="project" value="UniProtKB-UniRule"/>
</dbReference>
<dbReference type="CDD" id="cd06503">
    <property type="entry name" value="ATP-synt_Fo_b"/>
    <property type="match status" value="1"/>
</dbReference>
<dbReference type="HAMAP" id="MF_01398">
    <property type="entry name" value="ATP_synth_b_bprime"/>
    <property type="match status" value="1"/>
</dbReference>
<dbReference type="InterPro" id="IPR002146">
    <property type="entry name" value="ATP_synth_b/b'su_bac/chlpt"/>
</dbReference>
<dbReference type="PANTHER" id="PTHR34264">
    <property type="entry name" value="ATP SYNTHASE SUBUNIT B, CHLOROPLASTIC"/>
    <property type="match status" value="1"/>
</dbReference>
<dbReference type="PANTHER" id="PTHR34264:SF8">
    <property type="entry name" value="ATP SYNTHASE SUBUNIT B, CHLOROPLASTIC"/>
    <property type="match status" value="1"/>
</dbReference>
<dbReference type="Pfam" id="PF00430">
    <property type="entry name" value="ATP-synt_B"/>
    <property type="match status" value="1"/>
</dbReference>
<keyword id="KW-0066">ATP synthesis</keyword>
<keyword id="KW-0138">CF(0)</keyword>
<keyword id="KW-0150">Chloroplast</keyword>
<keyword id="KW-0375">Hydrogen ion transport</keyword>
<keyword id="KW-0406">Ion transport</keyword>
<keyword id="KW-0472">Membrane</keyword>
<keyword id="KW-0934">Plastid</keyword>
<keyword id="KW-0793">Thylakoid</keyword>
<keyword id="KW-0812">Transmembrane</keyword>
<keyword id="KW-1133">Transmembrane helix</keyword>
<keyword id="KW-0813">Transport</keyword>
<proteinExistence type="inferred from homology"/>
<accession>A9L982</accession>
<organism>
    <name type="scientific">Lemna minor</name>
    <name type="common">Common duckweed</name>
    <dbReference type="NCBI Taxonomy" id="4472"/>
    <lineage>
        <taxon>Eukaryota</taxon>
        <taxon>Viridiplantae</taxon>
        <taxon>Streptophyta</taxon>
        <taxon>Embryophyta</taxon>
        <taxon>Tracheophyta</taxon>
        <taxon>Spermatophyta</taxon>
        <taxon>Magnoliopsida</taxon>
        <taxon>Liliopsida</taxon>
        <taxon>Araceae</taxon>
        <taxon>Lemnoideae</taxon>
        <taxon>Lemna</taxon>
    </lineage>
</organism>
<evidence type="ECO:0000255" key="1">
    <source>
        <dbReference type="HAMAP-Rule" id="MF_01398"/>
    </source>
</evidence>
<geneLocation type="chloroplast"/>
<feature type="chain" id="PRO_0000368945" description="ATP synthase subunit b, chloroplastic">
    <location>
        <begin position="1"/>
        <end position="181"/>
    </location>
</feature>
<feature type="transmembrane region" description="Helical" evidence="1">
    <location>
        <begin position="27"/>
        <end position="49"/>
    </location>
</feature>